<gene>
    <name type="primary">zc3h15</name>
    <name type="synonym">dfrp1</name>
</gene>
<comment type="function">
    <text evidence="1">Protects drg1 from proteolytic degradation.</text>
</comment>
<comment type="subunit">
    <text evidence="1">Interacts with drg1.</text>
</comment>
<comment type="subcellular location">
    <subcellularLocation>
        <location evidence="1">Cytoplasm</location>
    </subcellularLocation>
    <subcellularLocation>
        <location evidence="1">Nucleus</location>
    </subcellularLocation>
</comment>
<comment type="similarity">
    <text evidence="5">Belongs to the ZC3H15/TMA46 family.</text>
</comment>
<dbReference type="EMBL" id="BC044451">
    <property type="protein sequence ID" value="AAH44451.1"/>
    <property type="molecule type" value="mRNA"/>
</dbReference>
<dbReference type="RefSeq" id="NP_956182.1">
    <property type="nucleotide sequence ID" value="NM_199888.1"/>
</dbReference>
<dbReference type="SMR" id="Q803J8"/>
<dbReference type="FunCoup" id="Q803J8">
    <property type="interactions" value="2743"/>
</dbReference>
<dbReference type="STRING" id="7955.ENSDARP00000017582"/>
<dbReference type="PaxDb" id="7955-ENSDARP00000017582"/>
<dbReference type="GeneID" id="334307"/>
<dbReference type="KEGG" id="dre:334307"/>
<dbReference type="AGR" id="ZFIN:ZDB-GENE-030131-6239"/>
<dbReference type="CTD" id="55854"/>
<dbReference type="ZFIN" id="ZDB-GENE-030131-6239">
    <property type="gene designation" value="zc3h15"/>
</dbReference>
<dbReference type="eggNOG" id="KOG1763">
    <property type="taxonomic scope" value="Eukaryota"/>
</dbReference>
<dbReference type="InParanoid" id="Q803J8"/>
<dbReference type="OrthoDB" id="278280at2759"/>
<dbReference type="PhylomeDB" id="Q803J8"/>
<dbReference type="Reactome" id="R-DRE-9629569">
    <property type="pathway name" value="Protein hydroxylation"/>
</dbReference>
<dbReference type="PRO" id="PR:Q803J8"/>
<dbReference type="Proteomes" id="UP000000437">
    <property type="component" value="Chromosome 9"/>
</dbReference>
<dbReference type="GO" id="GO:0005829">
    <property type="term" value="C:cytosol"/>
    <property type="evidence" value="ECO:0000318"/>
    <property type="project" value="GO_Central"/>
</dbReference>
<dbReference type="GO" id="GO:0005634">
    <property type="term" value="C:nucleus"/>
    <property type="evidence" value="ECO:0007669"/>
    <property type="project" value="UniProtKB-SubCell"/>
</dbReference>
<dbReference type="GO" id="GO:0008270">
    <property type="term" value="F:zinc ion binding"/>
    <property type="evidence" value="ECO:0007669"/>
    <property type="project" value="UniProtKB-KW"/>
</dbReference>
<dbReference type="GO" id="GO:0002181">
    <property type="term" value="P:cytoplasmic translation"/>
    <property type="evidence" value="ECO:0000318"/>
    <property type="project" value="GO_Central"/>
</dbReference>
<dbReference type="FunFam" id="4.10.1000.10:FF:000050">
    <property type="entry name" value="AGAP008634-PA"/>
    <property type="match status" value="1"/>
</dbReference>
<dbReference type="Gene3D" id="6.20.400.10">
    <property type="match status" value="1"/>
</dbReference>
<dbReference type="Gene3D" id="4.10.1000.10">
    <property type="entry name" value="Zinc finger, CCCH-type"/>
    <property type="match status" value="1"/>
</dbReference>
<dbReference type="InterPro" id="IPR032378">
    <property type="entry name" value="ZC3H15/TMA46_C"/>
</dbReference>
<dbReference type="InterPro" id="IPR000571">
    <property type="entry name" value="Znf_CCCH"/>
</dbReference>
<dbReference type="InterPro" id="IPR036855">
    <property type="entry name" value="Znf_CCCH_sf"/>
</dbReference>
<dbReference type="PANTHER" id="PTHR12681:SF0">
    <property type="entry name" value="ZINC FINGER CCCH DOMAIN-CONTAINING PROTEIN 15"/>
    <property type="match status" value="1"/>
</dbReference>
<dbReference type="PANTHER" id="PTHR12681">
    <property type="entry name" value="ZINC FINGER-CONTAINING PROTEIN P48ZNF"/>
    <property type="match status" value="1"/>
</dbReference>
<dbReference type="Pfam" id="PF16543">
    <property type="entry name" value="DFRP_C"/>
    <property type="match status" value="1"/>
</dbReference>
<dbReference type="Pfam" id="PF00642">
    <property type="entry name" value="zf-CCCH"/>
    <property type="match status" value="1"/>
</dbReference>
<dbReference type="SMART" id="SM00356">
    <property type="entry name" value="ZnF_C3H1"/>
    <property type="match status" value="2"/>
</dbReference>
<dbReference type="SUPFAM" id="SSF90229">
    <property type="entry name" value="CCCH zinc finger"/>
    <property type="match status" value="1"/>
</dbReference>
<dbReference type="PROSITE" id="PS50103">
    <property type="entry name" value="ZF_C3H1"/>
    <property type="match status" value="2"/>
</dbReference>
<feature type="chain" id="PRO_0000324646" description="Zinc finger CCCH domain-containing protein 15">
    <location>
        <begin position="1"/>
        <end position="433"/>
    </location>
</feature>
<feature type="zinc finger region" description="C3H1-type 1" evidence="3">
    <location>
        <begin position="99"/>
        <end position="126"/>
    </location>
</feature>
<feature type="zinc finger region" description="C3H1-type 2" evidence="3">
    <location>
        <begin position="175"/>
        <end position="213"/>
    </location>
</feature>
<feature type="region of interest" description="Disordered" evidence="4">
    <location>
        <begin position="1"/>
        <end position="20"/>
    </location>
</feature>
<feature type="region of interest" description="Required for interaction with DRG1" evidence="1">
    <location>
        <begin position="238"/>
        <end position="262"/>
    </location>
</feature>
<feature type="region of interest" description="Disordered" evidence="4">
    <location>
        <begin position="358"/>
        <end position="420"/>
    </location>
</feature>
<feature type="coiled-coil region" evidence="2">
    <location>
        <begin position="57"/>
        <end position="86"/>
    </location>
</feature>
<feature type="coiled-coil region" evidence="2">
    <location>
        <begin position="217"/>
        <end position="288"/>
    </location>
</feature>
<feature type="compositionally biased region" description="Acidic residues" evidence="4">
    <location>
        <begin position="393"/>
        <end position="405"/>
    </location>
</feature>
<reference key="1">
    <citation type="submission" date="2003-01" db="EMBL/GenBank/DDBJ databases">
        <authorList>
            <consortium name="NIH - Zebrafish Gene Collection (ZGC) project"/>
        </authorList>
    </citation>
    <scope>NUCLEOTIDE SEQUENCE [LARGE SCALE MRNA]</scope>
    <source>
        <strain>AB</strain>
    </source>
</reference>
<evidence type="ECO:0000250" key="1"/>
<evidence type="ECO:0000255" key="2"/>
<evidence type="ECO:0000255" key="3">
    <source>
        <dbReference type="PROSITE-ProRule" id="PRU00723"/>
    </source>
</evidence>
<evidence type="ECO:0000256" key="4">
    <source>
        <dbReference type="SAM" id="MobiDB-lite"/>
    </source>
</evidence>
<evidence type="ECO:0000305" key="5"/>
<name>ZC3HF_DANRE</name>
<keyword id="KW-0175">Coiled coil</keyword>
<keyword id="KW-0963">Cytoplasm</keyword>
<keyword id="KW-0479">Metal-binding</keyword>
<keyword id="KW-0539">Nucleus</keyword>
<keyword id="KW-1185">Reference proteome</keyword>
<keyword id="KW-0677">Repeat</keyword>
<keyword id="KW-0862">Zinc</keyword>
<keyword id="KW-0863">Zinc-finger</keyword>
<proteinExistence type="evidence at transcript level"/>
<sequence>MPPKKPAPAAANKKTQEKKKEKIIEDKTFGLKNKKGAKQQKFIKAVTQQVKFGQQNARQIAAAESEKTKKKDDKKKELSELNELFKPVVAAQKVSKGVDPKSVLCAFFKQGQCTKGDKCKFSHDLSLERKCEKRSLYVDGRDDELLEKDTMENWDEKKLEEVVNKKHGEAEKKKAKTQIVCKYFLDAIENNKYGWFWVCPGGGDNCMYRHALPVGFVLKKDKKNEEKNEEEISLEDLIETERSLLGANVTRITLETFLAWKKRKRQEKLAKAEQDMERKKADFKAGRALGVSGREVFEFRPELVDDDDEEADDTKYAEEDYNYGMSNQVEDTEEVQDIDIARFIPKEVDNAGITVASADRFTAKAPPTNDIDDNKLSEASGGTMENGEHSEDQTLEDGETNEESEAVPVDENLFTGEDLDELEEELNTLDLDE</sequence>
<protein>
    <recommendedName>
        <fullName>Zinc finger CCCH domain-containing protein 15</fullName>
    </recommendedName>
</protein>
<accession>Q803J8</accession>
<organism>
    <name type="scientific">Danio rerio</name>
    <name type="common">Zebrafish</name>
    <name type="synonym">Brachydanio rerio</name>
    <dbReference type="NCBI Taxonomy" id="7955"/>
    <lineage>
        <taxon>Eukaryota</taxon>
        <taxon>Metazoa</taxon>
        <taxon>Chordata</taxon>
        <taxon>Craniata</taxon>
        <taxon>Vertebrata</taxon>
        <taxon>Euteleostomi</taxon>
        <taxon>Actinopterygii</taxon>
        <taxon>Neopterygii</taxon>
        <taxon>Teleostei</taxon>
        <taxon>Ostariophysi</taxon>
        <taxon>Cypriniformes</taxon>
        <taxon>Danionidae</taxon>
        <taxon>Danioninae</taxon>
        <taxon>Danio</taxon>
    </lineage>
</organism>